<gene>
    <name evidence="1" type="primary">metK</name>
    <name type="ordered locus">TPASS_0794</name>
</gene>
<evidence type="ECO:0000255" key="1">
    <source>
        <dbReference type="HAMAP-Rule" id="MF_00086"/>
    </source>
</evidence>
<protein>
    <recommendedName>
        <fullName evidence="1">S-adenosylmethionine synthase</fullName>
        <shortName evidence="1">AdoMet synthase</shortName>
        <ecNumber evidence="1">2.5.1.6</ecNumber>
    </recommendedName>
    <alternativeName>
        <fullName evidence="1">MAT</fullName>
    </alternativeName>
    <alternativeName>
        <fullName evidence="1">Methionine adenosyltransferase</fullName>
    </alternativeName>
</protein>
<reference key="1">
    <citation type="journal article" date="2008" name="BMC Microbiol.">
        <title>Complete genome sequence of Treponema pallidum ssp. pallidum strain SS14 determined with oligonucleotide arrays.</title>
        <authorList>
            <person name="Matejkova P."/>
            <person name="Strouhal M."/>
            <person name="Smajs D."/>
            <person name="Norris S.J."/>
            <person name="Palzkill T."/>
            <person name="Petrosino J.F."/>
            <person name="Sodergren E."/>
            <person name="Norton J.E."/>
            <person name="Singh J."/>
            <person name="Richmond T.A."/>
            <person name="Molla M.N."/>
            <person name="Albert T.J."/>
            <person name="Weinstock G.M."/>
        </authorList>
    </citation>
    <scope>NUCLEOTIDE SEQUENCE [LARGE SCALE GENOMIC DNA]</scope>
    <source>
        <strain>SS14</strain>
    </source>
</reference>
<dbReference type="EC" id="2.5.1.6" evidence="1"/>
<dbReference type="EMBL" id="CP000805">
    <property type="protein sequence ID" value="ACD71212.1"/>
    <property type="molecule type" value="Genomic_DNA"/>
</dbReference>
<dbReference type="RefSeq" id="WP_010882239.1">
    <property type="nucleotide sequence ID" value="NC_021508.1"/>
</dbReference>
<dbReference type="SMR" id="B2S433"/>
<dbReference type="GeneID" id="93876558"/>
<dbReference type="KEGG" id="tpp:TPASS_0794"/>
<dbReference type="PATRIC" id="fig|455434.6.peg.782"/>
<dbReference type="UniPathway" id="UPA00315">
    <property type="reaction ID" value="UER00080"/>
</dbReference>
<dbReference type="Proteomes" id="UP000001202">
    <property type="component" value="Chromosome"/>
</dbReference>
<dbReference type="GO" id="GO:0005737">
    <property type="term" value="C:cytoplasm"/>
    <property type="evidence" value="ECO:0007669"/>
    <property type="project" value="UniProtKB-SubCell"/>
</dbReference>
<dbReference type="GO" id="GO:0005524">
    <property type="term" value="F:ATP binding"/>
    <property type="evidence" value="ECO:0007669"/>
    <property type="project" value="UniProtKB-UniRule"/>
</dbReference>
<dbReference type="GO" id="GO:0000287">
    <property type="term" value="F:magnesium ion binding"/>
    <property type="evidence" value="ECO:0007669"/>
    <property type="project" value="UniProtKB-UniRule"/>
</dbReference>
<dbReference type="GO" id="GO:0004478">
    <property type="term" value="F:methionine adenosyltransferase activity"/>
    <property type="evidence" value="ECO:0007669"/>
    <property type="project" value="UniProtKB-UniRule"/>
</dbReference>
<dbReference type="GO" id="GO:0006730">
    <property type="term" value="P:one-carbon metabolic process"/>
    <property type="evidence" value="ECO:0007669"/>
    <property type="project" value="UniProtKB-KW"/>
</dbReference>
<dbReference type="GO" id="GO:0006556">
    <property type="term" value="P:S-adenosylmethionine biosynthetic process"/>
    <property type="evidence" value="ECO:0007669"/>
    <property type="project" value="UniProtKB-UniRule"/>
</dbReference>
<dbReference type="CDD" id="cd18079">
    <property type="entry name" value="S-AdoMet_synt"/>
    <property type="match status" value="1"/>
</dbReference>
<dbReference type="FunFam" id="3.30.300.10:FF:000003">
    <property type="entry name" value="S-adenosylmethionine synthase"/>
    <property type="match status" value="1"/>
</dbReference>
<dbReference type="Gene3D" id="3.30.300.10">
    <property type="match status" value="3"/>
</dbReference>
<dbReference type="HAMAP" id="MF_00086">
    <property type="entry name" value="S_AdoMet_synth1"/>
    <property type="match status" value="1"/>
</dbReference>
<dbReference type="InterPro" id="IPR022631">
    <property type="entry name" value="ADOMET_SYNTHASE_CS"/>
</dbReference>
<dbReference type="InterPro" id="IPR022630">
    <property type="entry name" value="S-AdoMet_synt_C"/>
</dbReference>
<dbReference type="InterPro" id="IPR022629">
    <property type="entry name" value="S-AdoMet_synt_central"/>
</dbReference>
<dbReference type="InterPro" id="IPR022628">
    <property type="entry name" value="S-AdoMet_synt_N"/>
</dbReference>
<dbReference type="InterPro" id="IPR002133">
    <property type="entry name" value="S-AdoMet_synthetase"/>
</dbReference>
<dbReference type="InterPro" id="IPR022636">
    <property type="entry name" value="S-AdoMet_synthetase_sfam"/>
</dbReference>
<dbReference type="NCBIfam" id="TIGR01034">
    <property type="entry name" value="metK"/>
    <property type="match status" value="1"/>
</dbReference>
<dbReference type="PANTHER" id="PTHR11964">
    <property type="entry name" value="S-ADENOSYLMETHIONINE SYNTHETASE"/>
    <property type="match status" value="1"/>
</dbReference>
<dbReference type="Pfam" id="PF02773">
    <property type="entry name" value="S-AdoMet_synt_C"/>
    <property type="match status" value="1"/>
</dbReference>
<dbReference type="Pfam" id="PF02772">
    <property type="entry name" value="S-AdoMet_synt_M"/>
    <property type="match status" value="1"/>
</dbReference>
<dbReference type="Pfam" id="PF00438">
    <property type="entry name" value="S-AdoMet_synt_N"/>
    <property type="match status" value="1"/>
</dbReference>
<dbReference type="PIRSF" id="PIRSF000497">
    <property type="entry name" value="MAT"/>
    <property type="match status" value="1"/>
</dbReference>
<dbReference type="SUPFAM" id="SSF55973">
    <property type="entry name" value="S-adenosylmethionine synthetase"/>
    <property type="match status" value="3"/>
</dbReference>
<dbReference type="PROSITE" id="PS00376">
    <property type="entry name" value="ADOMET_SYNTHASE_1"/>
    <property type="match status" value="1"/>
</dbReference>
<dbReference type="PROSITE" id="PS00377">
    <property type="entry name" value="ADOMET_SYNTHASE_2"/>
    <property type="match status" value="1"/>
</dbReference>
<organism>
    <name type="scientific">Treponema pallidum subsp. pallidum (strain SS14)</name>
    <dbReference type="NCBI Taxonomy" id="455434"/>
    <lineage>
        <taxon>Bacteria</taxon>
        <taxon>Pseudomonadati</taxon>
        <taxon>Spirochaetota</taxon>
        <taxon>Spirochaetia</taxon>
        <taxon>Spirochaetales</taxon>
        <taxon>Treponemataceae</taxon>
        <taxon>Treponema</taxon>
    </lineage>
</organism>
<comment type="function">
    <text evidence="1">Catalyzes the formation of S-adenosylmethionine (AdoMet) from methionine and ATP. The overall synthetic reaction is composed of two sequential steps, AdoMet formation and the subsequent tripolyphosphate hydrolysis which occurs prior to release of AdoMet from the enzyme.</text>
</comment>
<comment type="catalytic activity">
    <reaction evidence="1">
        <text>L-methionine + ATP + H2O = S-adenosyl-L-methionine + phosphate + diphosphate</text>
        <dbReference type="Rhea" id="RHEA:21080"/>
        <dbReference type="ChEBI" id="CHEBI:15377"/>
        <dbReference type="ChEBI" id="CHEBI:30616"/>
        <dbReference type="ChEBI" id="CHEBI:33019"/>
        <dbReference type="ChEBI" id="CHEBI:43474"/>
        <dbReference type="ChEBI" id="CHEBI:57844"/>
        <dbReference type="ChEBI" id="CHEBI:59789"/>
        <dbReference type="EC" id="2.5.1.6"/>
    </reaction>
</comment>
<comment type="cofactor">
    <cofactor evidence="1">
        <name>Mg(2+)</name>
        <dbReference type="ChEBI" id="CHEBI:18420"/>
    </cofactor>
    <text evidence="1">Binds 2 divalent ions per subunit.</text>
</comment>
<comment type="cofactor">
    <cofactor evidence="1">
        <name>K(+)</name>
        <dbReference type="ChEBI" id="CHEBI:29103"/>
    </cofactor>
    <text evidence="1">Binds 1 potassium ion per subunit.</text>
</comment>
<comment type="pathway">
    <text evidence="1">Amino-acid biosynthesis; S-adenosyl-L-methionine biosynthesis; S-adenosyl-L-methionine from L-methionine: step 1/1.</text>
</comment>
<comment type="subunit">
    <text evidence="1">Homotetramer; dimer of dimers.</text>
</comment>
<comment type="subcellular location">
    <subcellularLocation>
        <location evidence="1">Cytoplasm</location>
    </subcellularLocation>
</comment>
<comment type="similarity">
    <text evidence="1">Belongs to the AdoMet synthase family.</text>
</comment>
<keyword id="KW-0067">ATP-binding</keyword>
<keyword id="KW-0963">Cytoplasm</keyword>
<keyword id="KW-0460">Magnesium</keyword>
<keyword id="KW-0479">Metal-binding</keyword>
<keyword id="KW-0547">Nucleotide-binding</keyword>
<keyword id="KW-0554">One-carbon metabolism</keyword>
<keyword id="KW-0630">Potassium</keyword>
<keyword id="KW-0808">Transferase</keyword>
<feature type="chain" id="PRO_1000093098" description="S-adenosylmethionine synthase">
    <location>
        <begin position="1"/>
        <end position="396"/>
    </location>
</feature>
<feature type="region of interest" description="Flexible loop" evidence="1">
    <location>
        <begin position="98"/>
        <end position="108"/>
    </location>
</feature>
<feature type="binding site" description="in other chain" evidence="1">
    <location>
        <position position="14"/>
    </location>
    <ligand>
        <name>ATP</name>
        <dbReference type="ChEBI" id="CHEBI:30616"/>
        <note>ligand shared between two neighboring subunits</note>
    </ligand>
</feature>
<feature type="binding site" evidence="1">
    <location>
        <position position="16"/>
    </location>
    <ligand>
        <name>Mg(2+)</name>
        <dbReference type="ChEBI" id="CHEBI:18420"/>
    </ligand>
</feature>
<feature type="binding site" evidence="1">
    <location>
        <position position="42"/>
    </location>
    <ligand>
        <name>K(+)</name>
        <dbReference type="ChEBI" id="CHEBI:29103"/>
    </ligand>
</feature>
<feature type="binding site" description="in other chain" evidence="1">
    <location>
        <position position="55"/>
    </location>
    <ligand>
        <name>L-methionine</name>
        <dbReference type="ChEBI" id="CHEBI:57844"/>
        <note>ligand shared between two neighboring subunits</note>
    </ligand>
</feature>
<feature type="binding site" description="in other chain" evidence="1">
    <location>
        <position position="98"/>
    </location>
    <ligand>
        <name>L-methionine</name>
        <dbReference type="ChEBI" id="CHEBI:57844"/>
        <note>ligand shared between two neighboring subunits</note>
    </ligand>
</feature>
<feature type="binding site" description="in other chain" evidence="1">
    <location>
        <begin position="167"/>
        <end position="169"/>
    </location>
    <ligand>
        <name>ATP</name>
        <dbReference type="ChEBI" id="CHEBI:30616"/>
        <note>ligand shared between two neighboring subunits</note>
    </ligand>
</feature>
<feature type="binding site" description="in other chain" evidence="1">
    <location>
        <begin position="234"/>
        <end position="235"/>
    </location>
    <ligand>
        <name>ATP</name>
        <dbReference type="ChEBI" id="CHEBI:30616"/>
        <note>ligand shared between two neighboring subunits</note>
    </ligand>
</feature>
<feature type="binding site" evidence="1">
    <location>
        <position position="243"/>
    </location>
    <ligand>
        <name>ATP</name>
        <dbReference type="ChEBI" id="CHEBI:30616"/>
        <note>ligand shared between two neighboring subunits</note>
    </ligand>
</feature>
<feature type="binding site" evidence="1">
    <location>
        <position position="243"/>
    </location>
    <ligand>
        <name>L-methionine</name>
        <dbReference type="ChEBI" id="CHEBI:57844"/>
        <note>ligand shared between two neighboring subunits</note>
    </ligand>
</feature>
<feature type="binding site" description="in other chain" evidence="1">
    <location>
        <begin position="249"/>
        <end position="250"/>
    </location>
    <ligand>
        <name>ATP</name>
        <dbReference type="ChEBI" id="CHEBI:30616"/>
        <note>ligand shared between two neighboring subunits</note>
    </ligand>
</feature>
<feature type="binding site" evidence="1">
    <location>
        <position position="266"/>
    </location>
    <ligand>
        <name>ATP</name>
        <dbReference type="ChEBI" id="CHEBI:30616"/>
        <note>ligand shared between two neighboring subunits</note>
    </ligand>
</feature>
<feature type="binding site" evidence="1">
    <location>
        <position position="270"/>
    </location>
    <ligand>
        <name>ATP</name>
        <dbReference type="ChEBI" id="CHEBI:30616"/>
        <note>ligand shared between two neighboring subunits</note>
    </ligand>
</feature>
<feature type="binding site" description="in other chain" evidence="1">
    <location>
        <position position="274"/>
    </location>
    <ligand>
        <name>L-methionine</name>
        <dbReference type="ChEBI" id="CHEBI:57844"/>
        <note>ligand shared between two neighboring subunits</note>
    </ligand>
</feature>
<proteinExistence type="inferred from homology"/>
<accession>B2S433</accession>
<name>METK_TREPS</name>
<sequence>METFFTSESVSEGHPDKLCDQISDAVLDACLSQDPHSCVACETFASTSLILIGGEISTRAHINLTQIARDVAADIGYVSADVGLDAASMAVLDMTHHQSPDIAQGVHGAGLKEFAGSQGAGDQGIMFGFACRETPEFMPAPLMCAHAVVRYAATLRHERRVPWLRPDAKSQVTVQYEGHRPVRISAVVFSQQHDPSPSYETIRETLIEEIVRPALAPTGLLDENTRFFINPTGRFVIGGPFGDTGLTGRKIIVDTYGGMGRHGGGSFSGKDASKVDRSAAYMARYIAKNIVAADLAERCEVQLAYAIGVPYPVSLRIETFGTARASESHITHAVKEIFDLTPAGIVRTLDLCAPRYRSTAVYGHFGREQFPWERTDCVCDLQRAVRPFALSGQIKE</sequence>